<dbReference type="EC" id="3.2.2.6" evidence="4"/>
<dbReference type="EMBL" id="U49066">
    <property type="protein sequence ID" value="AAB53238.1"/>
    <property type="molecule type" value="mRNA"/>
</dbReference>
<dbReference type="RefSeq" id="NP_598259.1">
    <property type="nucleotide sequence ID" value="NM_133575.1"/>
</dbReference>
<dbReference type="SMR" id="Q62929"/>
<dbReference type="FunCoup" id="Q62929">
    <property type="interactions" value="20"/>
</dbReference>
<dbReference type="STRING" id="10116.ENSRNOP00000019880"/>
<dbReference type="GlyCosmos" id="Q62929">
    <property type="glycosylation" value="11 sites, No reported glycans"/>
</dbReference>
<dbReference type="GlyGen" id="Q62929">
    <property type="glycosylation" value="11 sites"/>
</dbReference>
<dbReference type="PhosphoSitePlus" id="Q62929"/>
<dbReference type="PaxDb" id="10116-ENSRNOP00000019880"/>
<dbReference type="GeneID" id="171106"/>
<dbReference type="KEGG" id="rno:171106"/>
<dbReference type="UCSC" id="RGD:621782">
    <property type="organism name" value="rat"/>
</dbReference>
<dbReference type="AGR" id="RGD:621782"/>
<dbReference type="CTD" id="8808"/>
<dbReference type="RGD" id="621782">
    <property type="gene designation" value="Il1rl2"/>
</dbReference>
<dbReference type="eggNOG" id="ENOG502QWEU">
    <property type="taxonomic scope" value="Eukaryota"/>
</dbReference>
<dbReference type="InParanoid" id="Q62929"/>
<dbReference type="PhylomeDB" id="Q62929"/>
<dbReference type="Reactome" id="R-RNO-9007892">
    <property type="pathway name" value="Interleukin-38 signaling"/>
</dbReference>
<dbReference type="Reactome" id="R-RNO-9014826">
    <property type="pathway name" value="Interleukin-36 pathway"/>
</dbReference>
<dbReference type="PRO" id="PR:Q62929"/>
<dbReference type="Proteomes" id="UP000002494">
    <property type="component" value="Unplaced"/>
</dbReference>
<dbReference type="GO" id="GO:0009986">
    <property type="term" value="C:cell surface"/>
    <property type="evidence" value="ECO:0000318"/>
    <property type="project" value="GO_Central"/>
</dbReference>
<dbReference type="GO" id="GO:0005886">
    <property type="term" value="C:plasma membrane"/>
    <property type="evidence" value="ECO:0000318"/>
    <property type="project" value="GO_Central"/>
</dbReference>
<dbReference type="GO" id="GO:0004908">
    <property type="term" value="F:interleukin-1 receptor activity"/>
    <property type="evidence" value="ECO:0007669"/>
    <property type="project" value="InterPro"/>
</dbReference>
<dbReference type="GO" id="GO:0061809">
    <property type="term" value="F:NAD+ nucleosidase activity, cyclic ADP-ribose generating"/>
    <property type="evidence" value="ECO:0007669"/>
    <property type="project" value="UniProtKB-EC"/>
</dbReference>
<dbReference type="GO" id="GO:0007166">
    <property type="term" value="P:cell surface receptor signaling pathway"/>
    <property type="evidence" value="ECO:0000318"/>
    <property type="project" value="GO_Central"/>
</dbReference>
<dbReference type="GO" id="GO:0032755">
    <property type="term" value="P:positive regulation of interleukin-6 production"/>
    <property type="evidence" value="ECO:0000266"/>
    <property type="project" value="RGD"/>
</dbReference>
<dbReference type="GO" id="GO:0045582">
    <property type="term" value="P:positive regulation of T cell differentiation"/>
    <property type="evidence" value="ECO:0000266"/>
    <property type="project" value="RGD"/>
</dbReference>
<dbReference type="GO" id="GO:0050727">
    <property type="term" value="P:regulation of inflammatory response"/>
    <property type="evidence" value="ECO:0000266"/>
    <property type="project" value="RGD"/>
</dbReference>
<dbReference type="FunFam" id="3.40.50.10140:FF:000002">
    <property type="entry name" value="Interleukin 1 receptor accessory protein"/>
    <property type="match status" value="1"/>
</dbReference>
<dbReference type="FunFam" id="2.60.40.10:FF:001096">
    <property type="entry name" value="Interleukin 1 receptor like 2"/>
    <property type="match status" value="1"/>
</dbReference>
<dbReference type="FunFam" id="2.60.40.10:FF:001302">
    <property type="entry name" value="Interleukin 1 receptor like 2"/>
    <property type="match status" value="1"/>
</dbReference>
<dbReference type="FunFam" id="2.60.40.10:FF:000188">
    <property type="entry name" value="Interleukin-1 receptor accessory protein-like 1"/>
    <property type="match status" value="1"/>
</dbReference>
<dbReference type="Gene3D" id="2.60.40.10">
    <property type="entry name" value="Immunoglobulins"/>
    <property type="match status" value="3"/>
</dbReference>
<dbReference type="Gene3D" id="3.40.50.10140">
    <property type="entry name" value="Toll/interleukin-1 receptor homology (TIR) domain"/>
    <property type="match status" value="1"/>
</dbReference>
<dbReference type="InterPro" id="IPR007110">
    <property type="entry name" value="Ig-like_dom"/>
</dbReference>
<dbReference type="InterPro" id="IPR036179">
    <property type="entry name" value="Ig-like_dom_sf"/>
</dbReference>
<dbReference type="InterPro" id="IPR013783">
    <property type="entry name" value="Ig-like_fold"/>
</dbReference>
<dbReference type="InterPro" id="IPR003599">
    <property type="entry name" value="Ig_sub"/>
</dbReference>
<dbReference type="InterPro" id="IPR003598">
    <property type="entry name" value="Ig_sub2"/>
</dbReference>
<dbReference type="InterPro" id="IPR015621">
    <property type="entry name" value="IL-1_rcpt_fam"/>
</dbReference>
<dbReference type="InterPro" id="IPR004074">
    <property type="entry name" value="IL-1_rcpt_I/II-typ"/>
</dbReference>
<dbReference type="InterPro" id="IPR000157">
    <property type="entry name" value="TIR_dom"/>
</dbReference>
<dbReference type="InterPro" id="IPR035897">
    <property type="entry name" value="Toll_tir_struct_dom_sf"/>
</dbReference>
<dbReference type="PANTHER" id="PTHR11890">
    <property type="entry name" value="INTERLEUKIN-1 RECEPTOR FAMILY MEMBER"/>
    <property type="match status" value="1"/>
</dbReference>
<dbReference type="PANTHER" id="PTHR11890:SF9">
    <property type="entry name" value="INTERLEUKIN-1 RECEPTOR-LIKE 2"/>
    <property type="match status" value="1"/>
</dbReference>
<dbReference type="Pfam" id="PF13895">
    <property type="entry name" value="Ig_2"/>
    <property type="match status" value="1"/>
</dbReference>
<dbReference type="Pfam" id="PF01582">
    <property type="entry name" value="TIR"/>
    <property type="match status" value="1"/>
</dbReference>
<dbReference type="PRINTS" id="PR01536">
    <property type="entry name" value="INTRLKN1R12F"/>
</dbReference>
<dbReference type="PRINTS" id="PR01537">
    <property type="entry name" value="INTRLKN1R1F"/>
</dbReference>
<dbReference type="SMART" id="SM00409">
    <property type="entry name" value="IG"/>
    <property type="match status" value="3"/>
</dbReference>
<dbReference type="SMART" id="SM00408">
    <property type="entry name" value="IGc2"/>
    <property type="match status" value="2"/>
</dbReference>
<dbReference type="SMART" id="SM00255">
    <property type="entry name" value="TIR"/>
    <property type="match status" value="1"/>
</dbReference>
<dbReference type="SUPFAM" id="SSF48726">
    <property type="entry name" value="Immunoglobulin"/>
    <property type="match status" value="3"/>
</dbReference>
<dbReference type="SUPFAM" id="SSF52200">
    <property type="entry name" value="Toll/Interleukin receptor TIR domain"/>
    <property type="match status" value="1"/>
</dbReference>
<dbReference type="PROSITE" id="PS50835">
    <property type="entry name" value="IG_LIKE"/>
    <property type="match status" value="2"/>
</dbReference>
<dbReference type="PROSITE" id="PS50104">
    <property type="entry name" value="TIR"/>
    <property type="match status" value="1"/>
</dbReference>
<evidence type="ECO:0000250" key="1">
    <source>
        <dbReference type="UniProtKB" id="Q9ERS7"/>
    </source>
</evidence>
<evidence type="ECO:0000255" key="2"/>
<evidence type="ECO:0000255" key="3">
    <source>
        <dbReference type="PROSITE-ProRule" id="PRU00114"/>
    </source>
</evidence>
<evidence type="ECO:0000255" key="4">
    <source>
        <dbReference type="PROSITE-ProRule" id="PRU00204"/>
    </source>
</evidence>
<evidence type="ECO:0000305" key="5"/>
<name>ILRL2_RAT</name>
<reference key="1">
    <citation type="journal article" date="1996" name="J. Neuroimmunol.">
        <title>Cloning of a cDNA encoding a novel interleukin-1 receptor related protein (IL1R-rp2).</title>
        <authorList>
            <person name="Lovenberg T.W."/>
            <person name="Crowe P.D."/>
            <person name="Liu C."/>
            <person name="Chalmers D.T."/>
            <person name="Liu X.-J."/>
            <person name="Liaw C."/>
            <person name="Clevenger W."/>
            <person name="Oltersdorf T."/>
            <person name="De Souza E.B."/>
            <person name="Maki R.A."/>
        </authorList>
    </citation>
    <scope>NUCLEOTIDE SEQUENCE [MRNA]</scope>
    <source>
        <tissue>Brain</tissue>
    </source>
</reference>
<keyword id="KW-1015">Disulfide bond</keyword>
<keyword id="KW-0325">Glycoprotein</keyword>
<keyword id="KW-0378">Hydrolase</keyword>
<keyword id="KW-0393">Immunoglobulin domain</keyword>
<keyword id="KW-0472">Membrane</keyword>
<keyword id="KW-0520">NAD</keyword>
<keyword id="KW-0675">Receptor</keyword>
<keyword id="KW-1185">Reference proteome</keyword>
<keyword id="KW-0677">Repeat</keyword>
<keyword id="KW-0732">Signal</keyword>
<keyword id="KW-0812">Transmembrane</keyword>
<keyword id="KW-1133">Transmembrane helix</keyword>
<accession>Q62929</accession>
<comment type="function">
    <text evidence="1">Receptor for interleukin-36 (IL36A, IL36B and IL36G). After binding to interleukin-36 associates with the coreceptor IL1RAP to form the interleukin-36 receptor complex which mediates interleukin-36-dependent activation of NF-kappa-B, MAPK and other pathways. The IL-36 signaling system is thought to be present in epithelial barriers and to take part in local inflammatory response; it is similar to the IL-1 system. Seems to be involved in skin inflammatory response by induction of the IL-23/IL-17/IL-22 pathway. Receptor for the interleukin IL36G. Binding to the agonist leads to the activation of NF-kappa-B (By similarity).</text>
</comment>
<comment type="catalytic activity">
    <reaction evidence="4">
        <text>NAD(+) + H2O = ADP-D-ribose + nicotinamide + H(+)</text>
        <dbReference type="Rhea" id="RHEA:16301"/>
        <dbReference type="ChEBI" id="CHEBI:15377"/>
        <dbReference type="ChEBI" id="CHEBI:15378"/>
        <dbReference type="ChEBI" id="CHEBI:17154"/>
        <dbReference type="ChEBI" id="CHEBI:57540"/>
        <dbReference type="ChEBI" id="CHEBI:57967"/>
        <dbReference type="EC" id="3.2.2.6"/>
    </reaction>
    <physiologicalReaction direction="left-to-right" evidence="4">
        <dbReference type="Rhea" id="RHEA:16302"/>
    </physiologicalReaction>
</comment>
<comment type="subunit">
    <text evidence="1">Interacts with IL1RAP; the association is enhanced by IL36B indicative for an functional signaling complex and inhibited by IL36RN (By similarity).</text>
</comment>
<comment type="subcellular location">
    <subcellularLocation>
        <location>Membrane</location>
        <topology>Single-pass type I membrane protein</topology>
    </subcellularLocation>
</comment>
<comment type="tissue specificity">
    <text>Predominant expression in the lung and epididymis, with lower expression in cerebral cortex and testis. Expression in the brain is non-neuronal and associated with the cerebral vasculature. Not detected in any cell line tested.</text>
</comment>
<comment type="domain">
    <text evidence="4">The TIR domain mediates NAD(+) hydrolase (NADase) activity. Self-association of TIR domains is required for NADase activity.</text>
</comment>
<comment type="similarity">
    <text evidence="5">Belongs to the interleukin-1 receptor family.</text>
</comment>
<feature type="signal peptide" evidence="2">
    <location>
        <begin position="1"/>
        <end position="21"/>
    </location>
</feature>
<feature type="chain" id="PRO_0000015447" description="Interleukin-1 receptor-like 2">
    <location>
        <begin position="22"/>
        <end position="561"/>
    </location>
</feature>
<feature type="topological domain" description="Extracellular" evidence="2">
    <location>
        <begin position="22"/>
        <end position="338"/>
    </location>
</feature>
<feature type="transmembrane region" description="Helical" evidence="2">
    <location>
        <begin position="339"/>
        <end position="358"/>
    </location>
</feature>
<feature type="topological domain" description="Cytoplasmic" evidence="2">
    <location>
        <begin position="359"/>
        <end position="561"/>
    </location>
</feature>
<feature type="domain" description="Ig-like C2-type 1">
    <location>
        <begin position="22"/>
        <end position="113"/>
    </location>
</feature>
<feature type="domain" description="Ig-like C2-type 2">
    <location>
        <begin position="128"/>
        <end position="215"/>
    </location>
</feature>
<feature type="domain" description="Ig-like C2-type 3">
    <location>
        <begin position="225"/>
        <end position="321"/>
    </location>
</feature>
<feature type="domain" description="TIR" evidence="4">
    <location>
        <begin position="384"/>
        <end position="539"/>
    </location>
</feature>
<feature type="active site" evidence="4">
    <location>
        <position position="470"/>
    </location>
</feature>
<feature type="glycosylation site" description="N-linked (GlcNAc...) asparagine" evidence="2">
    <location>
        <position position="23"/>
    </location>
</feature>
<feature type="glycosylation site" description="N-linked (GlcNAc...) asparagine" evidence="2">
    <location>
        <position position="43"/>
    </location>
</feature>
<feature type="glycosylation site" description="N-linked (GlcNAc...) asparagine" evidence="2">
    <location>
        <position position="55"/>
    </location>
</feature>
<feature type="glycosylation site" description="N-linked (GlcNAc...) asparagine" evidence="2">
    <location>
        <position position="111"/>
    </location>
</feature>
<feature type="glycosylation site" description="N-linked (GlcNAc...) asparagine" evidence="2">
    <location>
        <position position="130"/>
    </location>
</feature>
<feature type="glycosylation site" description="N-linked (GlcNAc...) asparagine" evidence="2">
    <location>
        <position position="231"/>
    </location>
</feature>
<feature type="glycosylation site" description="N-linked (GlcNAc...) asparagine" evidence="2">
    <location>
        <position position="237"/>
    </location>
</feature>
<feature type="glycosylation site" description="N-linked (GlcNAc...) asparagine" evidence="2">
    <location>
        <position position="253"/>
    </location>
</feature>
<feature type="glycosylation site" description="N-linked (GlcNAc...) asparagine" evidence="2">
    <location>
        <position position="269"/>
    </location>
</feature>
<feature type="glycosylation site" description="N-linked (GlcNAc...) asparagine" evidence="2">
    <location>
        <position position="290"/>
    </location>
</feature>
<feature type="glycosylation site" description="N-linked (GlcNAc...) asparagine" evidence="2">
    <location>
        <position position="302"/>
    </location>
</feature>
<feature type="disulfide bond" evidence="3">
    <location>
        <begin position="44"/>
        <end position="97"/>
    </location>
</feature>
<feature type="disulfide bond" evidence="3">
    <location>
        <begin position="149"/>
        <end position="199"/>
    </location>
</feature>
<feature type="disulfide bond" evidence="3">
    <location>
        <begin position="252"/>
        <end position="319"/>
    </location>
</feature>
<proteinExistence type="evidence at transcript level"/>
<organism>
    <name type="scientific">Rattus norvegicus</name>
    <name type="common">Rat</name>
    <dbReference type="NCBI Taxonomy" id="10116"/>
    <lineage>
        <taxon>Eukaryota</taxon>
        <taxon>Metazoa</taxon>
        <taxon>Chordata</taxon>
        <taxon>Craniata</taxon>
        <taxon>Vertebrata</taxon>
        <taxon>Euteleostomi</taxon>
        <taxon>Mammalia</taxon>
        <taxon>Eutheria</taxon>
        <taxon>Euarchontoglires</taxon>
        <taxon>Glires</taxon>
        <taxon>Rodentia</taxon>
        <taxon>Myomorpha</taxon>
        <taxon>Muroidea</taxon>
        <taxon>Muridae</taxon>
        <taxon>Murinae</taxon>
        <taxon>Rattus</taxon>
    </lineage>
</organism>
<protein>
    <recommendedName>
        <fullName>Interleukin-1 receptor-like 2</fullName>
        <ecNumber evidence="4">3.2.2.6</ecNumber>
    </recommendedName>
    <alternativeName>
        <fullName>IL-36 receptor</fullName>
    </alternativeName>
    <alternativeName>
        <fullName>Interleukin-1 receptor-related protein 2</fullName>
        <shortName>IL-1Rrp2</shortName>
        <shortName>IL1R-rp2</shortName>
    </alternativeName>
</protein>
<gene>
    <name type="primary">Il1rl2</name>
</gene>
<sequence>MGMPPLLFCWVSFVLPLFVAAGNCTDVYMHHEMISEGQPFPFNCTYPPVTNGAVNLTWHRTPSKSPISINRHVRIHQDQSWILFLPLALEDSGIYQCVIKDAHSCYRIAINLTVFRKHWCDSSNEESSINSSDEYQQWLPIGKSGSLTCHLYFPESCVLDSIKWYKGCEEIKVSKKFCPTGTKLLVNNIDVEDSGSYACSARLTHLGRIFTVRNYIAVNTKEVGSGGRIPNITYPKNNSIEVQLGSTLIVDCNITDTKENTNLRCWRVNNTLVDDYYNDFKRIQEGIETNLSLRNHILYTVNITFLEVKMEDYGHPFTCHAAVSAAYIILKRPAPDFRAYLIGGLMAFLLLAVSILYIYNTFKVDIVLWYRSTFHTAQAPDDEKLYDAYVLYPKYPRESQGHDVDTLVLKILPEVLEKQCGYKLFIFGRDEFPGQAVASVIDENIKLCRRLMVLVAPETSSFSFLKNLTEEQIAVYNALVQDGMKVILIELERVKDYSTMPESIQYIRQKHGAIQWDGDFTEQAQCAKTKFWKKVRYHMPPRRYPASPPVQLLGHTPRIPG</sequence>